<name>SYH_STRZP</name>
<organism>
    <name type="scientific">Streptococcus pneumoniae (strain P1031)</name>
    <dbReference type="NCBI Taxonomy" id="488223"/>
    <lineage>
        <taxon>Bacteria</taxon>
        <taxon>Bacillati</taxon>
        <taxon>Bacillota</taxon>
        <taxon>Bacilli</taxon>
        <taxon>Lactobacillales</taxon>
        <taxon>Streptococcaceae</taxon>
        <taxon>Streptococcus</taxon>
    </lineage>
</organism>
<feature type="chain" id="PRO_1000199157" description="Histidine--tRNA ligase">
    <location>
        <begin position="1"/>
        <end position="429"/>
    </location>
</feature>
<reference key="1">
    <citation type="journal article" date="2010" name="Genome Biol.">
        <title>Structure and dynamics of the pan-genome of Streptococcus pneumoniae and closely related species.</title>
        <authorList>
            <person name="Donati C."/>
            <person name="Hiller N.L."/>
            <person name="Tettelin H."/>
            <person name="Muzzi A."/>
            <person name="Croucher N.J."/>
            <person name="Angiuoli S.V."/>
            <person name="Oggioni M."/>
            <person name="Dunning Hotopp J.C."/>
            <person name="Hu F.Z."/>
            <person name="Riley D.R."/>
            <person name="Covacci A."/>
            <person name="Mitchell T.J."/>
            <person name="Bentley S.D."/>
            <person name="Kilian M."/>
            <person name="Ehrlich G.D."/>
            <person name="Rappuoli R."/>
            <person name="Moxon E.R."/>
            <person name="Masignani V."/>
        </authorList>
    </citation>
    <scope>NUCLEOTIDE SEQUENCE [LARGE SCALE GENOMIC DNA]</scope>
    <source>
        <strain>P1031</strain>
    </source>
</reference>
<evidence type="ECO:0000255" key="1">
    <source>
        <dbReference type="HAMAP-Rule" id="MF_00127"/>
    </source>
</evidence>
<protein>
    <recommendedName>
        <fullName evidence="1">Histidine--tRNA ligase</fullName>
        <ecNumber evidence="1">6.1.1.21</ecNumber>
    </recommendedName>
    <alternativeName>
        <fullName evidence="1">Histidyl-tRNA synthetase</fullName>
        <shortName evidence="1">HisRS</shortName>
    </alternativeName>
</protein>
<comment type="catalytic activity">
    <reaction evidence="1">
        <text>tRNA(His) + L-histidine + ATP = L-histidyl-tRNA(His) + AMP + diphosphate + H(+)</text>
        <dbReference type="Rhea" id="RHEA:17313"/>
        <dbReference type="Rhea" id="RHEA-COMP:9665"/>
        <dbReference type="Rhea" id="RHEA-COMP:9689"/>
        <dbReference type="ChEBI" id="CHEBI:15378"/>
        <dbReference type="ChEBI" id="CHEBI:30616"/>
        <dbReference type="ChEBI" id="CHEBI:33019"/>
        <dbReference type="ChEBI" id="CHEBI:57595"/>
        <dbReference type="ChEBI" id="CHEBI:78442"/>
        <dbReference type="ChEBI" id="CHEBI:78527"/>
        <dbReference type="ChEBI" id="CHEBI:456215"/>
        <dbReference type="EC" id="6.1.1.21"/>
    </reaction>
</comment>
<comment type="subunit">
    <text evidence="1">Homodimer.</text>
</comment>
<comment type="subcellular location">
    <subcellularLocation>
        <location evidence="1">Cytoplasm</location>
    </subcellularLocation>
</comment>
<comment type="similarity">
    <text evidence="1">Belongs to the class-II aminoacyl-tRNA synthetase family.</text>
</comment>
<proteinExistence type="inferred from homology"/>
<accession>C1CNA0</accession>
<gene>
    <name evidence="1" type="primary">hisS</name>
    <name type="ordered locus">SPP_2177</name>
</gene>
<keyword id="KW-0030">Aminoacyl-tRNA synthetase</keyword>
<keyword id="KW-0067">ATP-binding</keyword>
<keyword id="KW-0963">Cytoplasm</keyword>
<keyword id="KW-0436">Ligase</keyword>
<keyword id="KW-0547">Nucleotide-binding</keyword>
<keyword id="KW-0648">Protein biosynthesis</keyword>
<sequence>MKLQKPKGTQDILPAESAKWQYVEGFAREIFKRYNYAEVRTPIFEHYEVISRSVGDTTDIVTKEMYDFYDKGDRHITLRPEGTAPVVRAYVENKLFAPEVQKPSKFYYMGPMFRYERPQAGRLRQFHQIGVECFGSSNPATDVETIVMAAHFLKEIGIQGVKLHLNTLGNPESRAAYRQALIDYLTPLKETLSKDSQRRLEENPLRVLDSKEKEDKVAVENAPSILDFLDEESQTHFDAVSQMLENLGVDYIIDTNMVRGLDYYNHTIFEFITEIEGNDLTVCAGGRYDGLVAYFGGPETAGFGFGLGVERLLLILEKQGVALPIENALDVYIAVLGDGANVKALELVQALRQQGFKAERDYLNRKLKAQFKSADVFAAKTLITLGESEVESRQVTVKNNQTREEVQVSLETISQNFSEIFEKLGFYTQ</sequence>
<dbReference type="EC" id="6.1.1.21" evidence="1"/>
<dbReference type="EMBL" id="CP000920">
    <property type="protein sequence ID" value="ACO21852.1"/>
    <property type="molecule type" value="Genomic_DNA"/>
</dbReference>
<dbReference type="RefSeq" id="WP_000775831.1">
    <property type="nucleotide sequence ID" value="NC_012467.1"/>
</dbReference>
<dbReference type="SMR" id="C1CNA0"/>
<dbReference type="GeneID" id="45652646"/>
<dbReference type="KEGG" id="spp:SPP_2177"/>
<dbReference type="HOGENOM" id="CLU_025113_1_1_9"/>
<dbReference type="GO" id="GO:0005737">
    <property type="term" value="C:cytoplasm"/>
    <property type="evidence" value="ECO:0007669"/>
    <property type="project" value="UniProtKB-SubCell"/>
</dbReference>
<dbReference type="GO" id="GO:0005524">
    <property type="term" value="F:ATP binding"/>
    <property type="evidence" value="ECO:0007669"/>
    <property type="project" value="UniProtKB-UniRule"/>
</dbReference>
<dbReference type="GO" id="GO:0140096">
    <property type="term" value="F:catalytic activity, acting on a protein"/>
    <property type="evidence" value="ECO:0007669"/>
    <property type="project" value="UniProtKB-ARBA"/>
</dbReference>
<dbReference type="GO" id="GO:0004821">
    <property type="term" value="F:histidine-tRNA ligase activity"/>
    <property type="evidence" value="ECO:0007669"/>
    <property type="project" value="UniProtKB-UniRule"/>
</dbReference>
<dbReference type="GO" id="GO:0016740">
    <property type="term" value="F:transferase activity"/>
    <property type="evidence" value="ECO:0007669"/>
    <property type="project" value="UniProtKB-ARBA"/>
</dbReference>
<dbReference type="GO" id="GO:0006427">
    <property type="term" value="P:histidyl-tRNA aminoacylation"/>
    <property type="evidence" value="ECO:0007669"/>
    <property type="project" value="UniProtKB-UniRule"/>
</dbReference>
<dbReference type="CDD" id="cd00773">
    <property type="entry name" value="HisRS-like_core"/>
    <property type="match status" value="1"/>
</dbReference>
<dbReference type="CDD" id="cd00859">
    <property type="entry name" value="HisRS_anticodon"/>
    <property type="match status" value="1"/>
</dbReference>
<dbReference type="FunFam" id="3.30.930.10:FF:000005">
    <property type="entry name" value="Histidine--tRNA ligase"/>
    <property type="match status" value="1"/>
</dbReference>
<dbReference type="FunFam" id="3.40.50.800:FF:000022">
    <property type="entry name" value="Histidine--tRNA ligase"/>
    <property type="match status" value="1"/>
</dbReference>
<dbReference type="Gene3D" id="3.40.50.800">
    <property type="entry name" value="Anticodon-binding domain"/>
    <property type="match status" value="1"/>
</dbReference>
<dbReference type="Gene3D" id="3.30.930.10">
    <property type="entry name" value="Bira Bifunctional Protein, Domain 2"/>
    <property type="match status" value="1"/>
</dbReference>
<dbReference type="HAMAP" id="MF_00127">
    <property type="entry name" value="His_tRNA_synth"/>
    <property type="match status" value="1"/>
</dbReference>
<dbReference type="InterPro" id="IPR006195">
    <property type="entry name" value="aa-tRNA-synth_II"/>
</dbReference>
<dbReference type="InterPro" id="IPR045864">
    <property type="entry name" value="aa-tRNA-synth_II/BPL/LPL"/>
</dbReference>
<dbReference type="InterPro" id="IPR004154">
    <property type="entry name" value="Anticodon-bd"/>
</dbReference>
<dbReference type="InterPro" id="IPR036621">
    <property type="entry name" value="Anticodon-bd_dom_sf"/>
</dbReference>
<dbReference type="InterPro" id="IPR015807">
    <property type="entry name" value="His-tRNA-ligase"/>
</dbReference>
<dbReference type="InterPro" id="IPR041715">
    <property type="entry name" value="HisRS-like_core"/>
</dbReference>
<dbReference type="InterPro" id="IPR004516">
    <property type="entry name" value="HisRS/HisZ"/>
</dbReference>
<dbReference type="InterPro" id="IPR033656">
    <property type="entry name" value="HisRS_anticodon"/>
</dbReference>
<dbReference type="NCBIfam" id="TIGR00442">
    <property type="entry name" value="hisS"/>
    <property type="match status" value="1"/>
</dbReference>
<dbReference type="PANTHER" id="PTHR43707:SF1">
    <property type="entry name" value="HISTIDINE--TRNA LIGASE, MITOCHONDRIAL-RELATED"/>
    <property type="match status" value="1"/>
</dbReference>
<dbReference type="PANTHER" id="PTHR43707">
    <property type="entry name" value="HISTIDYL-TRNA SYNTHETASE"/>
    <property type="match status" value="1"/>
</dbReference>
<dbReference type="Pfam" id="PF03129">
    <property type="entry name" value="HGTP_anticodon"/>
    <property type="match status" value="1"/>
</dbReference>
<dbReference type="Pfam" id="PF13393">
    <property type="entry name" value="tRNA-synt_His"/>
    <property type="match status" value="1"/>
</dbReference>
<dbReference type="PIRSF" id="PIRSF001549">
    <property type="entry name" value="His-tRNA_synth"/>
    <property type="match status" value="1"/>
</dbReference>
<dbReference type="SUPFAM" id="SSF52954">
    <property type="entry name" value="Class II aaRS ABD-related"/>
    <property type="match status" value="1"/>
</dbReference>
<dbReference type="SUPFAM" id="SSF55681">
    <property type="entry name" value="Class II aaRS and biotin synthetases"/>
    <property type="match status" value="1"/>
</dbReference>
<dbReference type="PROSITE" id="PS50862">
    <property type="entry name" value="AA_TRNA_LIGASE_II"/>
    <property type="match status" value="1"/>
</dbReference>